<dbReference type="EMBL" id="CP000758">
    <property type="protein sequence ID" value="ABS13069.1"/>
    <property type="molecule type" value="Genomic_DNA"/>
</dbReference>
<dbReference type="RefSeq" id="WP_010658108.1">
    <property type="nucleotide sequence ID" value="NC_009667.1"/>
</dbReference>
<dbReference type="SMR" id="A6WVR5"/>
<dbReference type="STRING" id="439375.Oant_0338"/>
<dbReference type="GeneID" id="61316503"/>
<dbReference type="KEGG" id="oan:Oant_0338"/>
<dbReference type="eggNOG" id="COG0378">
    <property type="taxonomic scope" value="Bacteria"/>
</dbReference>
<dbReference type="HOGENOM" id="CLU_072144_1_0_5"/>
<dbReference type="PhylomeDB" id="A6WVR5"/>
<dbReference type="Proteomes" id="UP000002301">
    <property type="component" value="Chromosome 1"/>
</dbReference>
<dbReference type="GO" id="GO:0005737">
    <property type="term" value="C:cytoplasm"/>
    <property type="evidence" value="ECO:0007669"/>
    <property type="project" value="UniProtKB-SubCell"/>
</dbReference>
<dbReference type="GO" id="GO:0005525">
    <property type="term" value="F:GTP binding"/>
    <property type="evidence" value="ECO:0007669"/>
    <property type="project" value="UniProtKB-KW"/>
</dbReference>
<dbReference type="GO" id="GO:0003924">
    <property type="term" value="F:GTPase activity"/>
    <property type="evidence" value="ECO:0007669"/>
    <property type="project" value="InterPro"/>
</dbReference>
<dbReference type="GO" id="GO:0016151">
    <property type="term" value="F:nickel cation binding"/>
    <property type="evidence" value="ECO:0007669"/>
    <property type="project" value="UniProtKB-UniRule"/>
</dbReference>
<dbReference type="GO" id="GO:0043419">
    <property type="term" value="P:urea catabolic process"/>
    <property type="evidence" value="ECO:0007669"/>
    <property type="project" value="InterPro"/>
</dbReference>
<dbReference type="CDD" id="cd05540">
    <property type="entry name" value="UreG"/>
    <property type="match status" value="1"/>
</dbReference>
<dbReference type="Gene3D" id="3.40.50.300">
    <property type="entry name" value="P-loop containing nucleotide triphosphate hydrolases"/>
    <property type="match status" value="1"/>
</dbReference>
<dbReference type="HAMAP" id="MF_01389">
    <property type="entry name" value="UreG"/>
    <property type="match status" value="1"/>
</dbReference>
<dbReference type="InterPro" id="IPR003495">
    <property type="entry name" value="CobW/HypB/UreG_nucleotide-bd"/>
</dbReference>
<dbReference type="InterPro" id="IPR027417">
    <property type="entry name" value="P-loop_NTPase"/>
</dbReference>
<dbReference type="InterPro" id="IPR004400">
    <property type="entry name" value="UreG"/>
</dbReference>
<dbReference type="NCBIfam" id="TIGR00101">
    <property type="entry name" value="ureG"/>
    <property type="match status" value="1"/>
</dbReference>
<dbReference type="PANTHER" id="PTHR31715">
    <property type="entry name" value="UREASE ACCESSORY PROTEIN G"/>
    <property type="match status" value="1"/>
</dbReference>
<dbReference type="PANTHER" id="PTHR31715:SF0">
    <property type="entry name" value="UREASE ACCESSORY PROTEIN G"/>
    <property type="match status" value="1"/>
</dbReference>
<dbReference type="Pfam" id="PF02492">
    <property type="entry name" value="cobW"/>
    <property type="match status" value="1"/>
</dbReference>
<dbReference type="PIRSF" id="PIRSF005624">
    <property type="entry name" value="Ni-bind_GTPase"/>
    <property type="match status" value="1"/>
</dbReference>
<dbReference type="SUPFAM" id="SSF52540">
    <property type="entry name" value="P-loop containing nucleoside triphosphate hydrolases"/>
    <property type="match status" value="1"/>
</dbReference>
<name>UREG_BRUA4</name>
<keyword id="KW-0143">Chaperone</keyword>
<keyword id="KW-0963">Cytoplasm</keyword>
<keyword id="KW-0342">GTP-binding</keyword>
<keyword id="KW-0996">Nickel insertion</keyword>
<keyword id="KW-0547">Nucleotide-binding</keyword>
<keyword id="KW-1185">Reference proteome</keyword>
<comment type="function">
    <text evidence="1">Facilitates the functional incorporation of the urease nickel metallocenter. This process requires GTP hydrolysis, probably effectuated by UreG.</text>
</comment>
<comment type="subunit">
    <text evidence="1">Homodimer. UreD, UreF and UreG form a complex that acts as a GTP-hydrolysis-dependent molecular chaperone, activating the urease apoprotein by helping to assemble the nickel containing metallocenter of UreC. The UreE protein probably delivers the nickel.</text>
</comment>
<comment type="subcellular location">
    <subcellularLocation>
        <location evidence="1">Cytoplasm</location>
    </subcellularLocation>
</comment>
<comment type="similarity">
    <text evidence="1">Belongs to the SIMIBI class G3E GTPase family. UreG subfamily.</text>
</comment>
<protein>
    <recommendedName>
        <fullName evidence="1">Urease accessory protein UreG</fullName>
    </recommendedName>
</protein>
<organism>
    <name type="scientific">Brucella anthropi (strain ATCC 49188 / DSM 6882 / CCUG 24695 / JCM 21032 / LMG 3331 / NBRC 15819 / NCTC 12168 / Alc 37)</name>
    <name type="common">Ochrobactrum anthropi</name>
    <dbReference type="NCBI Taxonomy" id="439375"/>
    <lineage>
        <taxon>Bacteria</taxon>
        <taxon>Pseudomonadati</taxon>
        <taxon>Pseudomonadota</taxon>
        <taxon>Alphaproteobacteria</taxon>
        <taxon>Hyphomicrobiales</taxon>
        <taxon>Brucellaceae</taxon>
        <taxon>Brucella/Ochrobactrum group</taxon>
        <taxon>Brucella</taxon>
    </lineage>
</organism>
<gene>
    <name evidence="1" type="primary">ureG</name>
    <name type="ordered locus">Oant_0338</name>
</gene>
<feature type="chain" id="PRO_1000145199" description="Urease accessory protein UreG">
    <location>
        <begin position="1"/>
        <end position="206"/>
    </location>
</feature>
<feature type="binding site" evidence="1">
    <location>
        <begin position="14"/>
        <end position="21"/>
    </location>
    <ligand>
        <name>GTP</name>
        <dbReference type="ChEBI" id="CHEBI:37565"/>
    </ligand>
</feature>
<sequence>MTQKNGPLRIGIGGPVGSGKTTLTEKLCKALRDKYSVAVITNDIYTQEDALILARSQALSEDRIMGVETGGCPHTAIREDASINLQAIAEMNRRFPDLEIVFIESGGDNLAATFSPDLADLTLYVISVCQGEEIPRKGGPGITRSDFLVINKSDLAPHVHVDLDIMQGDAARMRGKRPFGFTDLHRGKGVPEIIDFIVENGGLEAR</sequence>
<accession>A6WVR5</accession>
<evidence type="ECO:0000255" key="1">
    <source>
        <dbReference type="HAMAP-Rule" id="MF_01389"/>
    </source>
</evidence>
<reference key="1">
    <citation type="journal article" date="2011" name="J. Bacteriol.">
        <title>Genome of Ochrobactrum anthropi ATCC 49188 T, a versatile opportunistic pathogen and symbiont of several eukaryotic hosts.</title>
        <authorList>
            <person name="Chain P.S."/>
            <person name="Lang D.M."/>
            <person name="Comerci D.J."/>
            <person name="Malfatti S.A."/>
            <person name="Vergez L.M."/>
            <person name="Shin M."/>
            <person name="Ugalde R.A."/>
            <person name="Garcia E."/>
            <person name="Tolmasky M.E."/>
        </authorList>
    </citation>
    <scope>NUCLEOTIDE SEQUENCE [LARGE SCALE GENOMIC DNA]</scope>
    <source>
        <strain>ATCC 49188 / DSM 6882 / CCUG 24695 / JCM 21032 / LMG 3331 / NBRC 15819 / NCTC 12168 / Alc 37</strain>
    </source>
</reference>
<proteinExistence type="inferred from homology"/>